<feature type="chain" id="PRO_0000380441" description="DNA ligase">
    <location>
        <begin position="1"/>
        <end position="659"/>
    </location>
</feature>
<feature type="domain" description="BRCT" evidence="1">
    <location>
        <begin position="582"/>
        <end position="659"/>
    </location>
</feature>
<feature type="active site" description="N6-AMP-lysine intermediate" evidence="1">
    <location>
        <position position="112"/>
    </location>
</feature>
<feature type="binding site" evidence="1">
    <location>
        <begin position="32"/>
        <end position="36"/>
    </location>
    <ligand>
        <name>NAD(+)</name>
        <dbReference type="ChEBI" id="CHEBI:57540"/>
    </ligand>
</feature>
<feature type="binding site" evidence="1">
    <location>
        <begin position="81"/>
        <end position="82"/>
    </location>
    <ligand>
        <name>NAD(+)</name>
        <dbReference type="ChEBI" id="CHEBI:57540"/>
    </ligand>
</feature>
<feature type="binding site" evidence="1">
    <location>
        <position position="110"/>
    </location>
    <ligand>
        <name>NAD(+)</name>
        <dbReference type="ChEBI" id="CHEBI:57540"/>
    </ligand>
</feature>
<feature type="binding site" evidence="1">
    <location>
        <position position="133"/>
    </location>
    <ligand>
        <name>NAD(+)</name>
        <dbReference type="ChEBI" id="CHEBI:57540"/>
    </ligand>
</feature>
<feature type="binding site" evidence="1">
    <location>
        <position position="167"/>
    </location>
    <ligand>
        <name>NAD(+)</name>
        <dbReference type="ChEBI" id="CHEBI:57540"/>
    </ligand>
</feature>
<feature type="binding site" evidence="1">
    <location>
        <position position="282"/>
    </location>
    <ligand>
        <name>NAD(+)</name>
        <dbReference type="ChEBI" id="CHEBI:57540"/>
    </ligand>
</feature>
<feature type="binding site" evidence="1">
    <location>
        <position position="306"/>
    </location>
    <ligand>
        <name>NAD(+)</name>
        <dbReference type="ChEBI" id="CHEBI:57540"/>
    </ligand>
</feature>
<feature type="binding site" evidence="1">
    <location>
        <position position="399"/>
    </location>
    <ligand>
        <name>Zn(2+)</name>
        <dbReference type="ChEBI" id="CHEBI:29105"/>
    </ligand>
</feature>
<feature type="binding site" evidence="1">
    <location>
        <position position="402"/>
    </location>
    <ligand>
        <name>Zn(2+)</name>
        <dbReference type="ChEBI" id="CHEBI:29105"/>
    </ligand>
</feature>
<feature type="binding site" evidence="1">
    <location>
        <position position="415"/>
    </location>
    <ligand>
        <name>Zn(2+)</name>
        <dbReference type="ChEBI" id="CHEBI:29105"/>
    </ligand>
</feature>
<feature type="binding site" evidence="1">
    <location>
        <position position="420"/>
    </location>
    <ligand>
        <name>Zn(2+)</name>
        <dbReference type="ChEBI" id="CHEBI:29105"/>
    </ligand>
</feature>
<evidence type="ECO:0000255" key="1">
    <source>
        <dbReference type="HAMAP-Rule" id="MF_01588"/>
    </source>
</evidence>
<reference key="1">
    <citation type="journal article" date="2008" name="BMC Genomics">
        <title>The linear chromosome of the plant-pathogenic mycoplasma 'Candidatus Phytoplasma mali'.</title>
        <authorList>
            <person name="Kube M."/>
            <person name="Schneider B."/>
            <person name="Kuhl H."/>
            <person name="Dandekar T."/>
            <person name="Heitmann K."/>
            <person name="Migdoll A.M."/>
            <person name="Reinhardt R."/>
            <person name="Seemueller E."/>
        </authorList>
    </citation>
    <scope>NUCLEOTIDE SEQUENCE [LARGE SCALE GENOMIC DNA]</scope>
    <source>
        <strain>AT</strain>
    </source>
</reference>
<organism>
    <name type="scientific">Phytoplasma mali (strain AT)</name>
    <dbReference type="NCBI Taxonomy" id="482235"/>
    <lineage>
        <taxon>Bacteria</taxon>
        <taxon>Bacillati</taxon>
        <taxon>Mycoplasmatota</taxon>
        <taxon>Mollicutes</taxon>
        <taxon>Acholeplasmatales</taxon>
        <taxon>Acholeplasmataceae</taxon>
        <taxon>Candidatus Phytoplasma</taxon>
        <taxon>16SrX (Apple proliferation group)</taxon>
    </lineage>
</organism>
<name>DNLJ_PHYMT</name>
<proteinExistence type="inferred from homology"/>
<keyword id="KW-0227">DNA damage</keyword>
<keyword id="KW-0234">DNA repair</keyword>
<keyword id="KW-0235">DNA replication</keyword>
<keyword id="KW-0436">Ligase</keyword>
<keyword id="KW-0460">Magnesium</keyword>
<keyword id="KW-0464">Manganese</keyword>
<keyword id="KW-0479">Metal-binding</keyword>
<keyword id="KW-0520">NAD</keyword>
<keyword id="KW-1185">Reference proteome</keyword>
<keyword id="KW-0862">Zinc</keyword>
<comment type="function">
    <text evidence="1">DNA ligase that catalyzes the formation of phosphodiester linkages between 5'-phosphoryl and 3'-hydroxyl groups in double-stranded DNA using NAD as a coenzyme and as the energy source for the reaction. It is essential for DNA replication and repair of damaged DNA.</text>
</comment>
<comment type="catalytic activity">
    <reaction evidence="1">
        <text>NAD(+) + (deoxyribonucleotide)n-3'-hydroxyl + 5'-phospho-(deoxyribonucleotide)m = (deoxyribonucleotide)n+m + AMP + beta-nicotinamide D-nucleotide.</text>
        <dbReference type="EC" id="6.5.1.2"/>
    </reaction>
</comment>
<comment type="cofactor">
    <cofactor evidence="1">
        <name>Mg(2+)</name>
        <dbReference type="ChEBI" id="CHEBI:18420"/>
    </cofactor>
    <cofactor evidence="1">
        <name>Mn(2+)</name>
        <dbReference type="ChEBI" id="CHEBI:29035"/>
    </cofactor>
</comment>
<comment type="similarity">
    <text evidence="1">Belongs to the NAD-dependent DNA ligase family. LigA subfamily.</text>
</comment>
<protein>
    <recommendedName>
        <fullName evidence="1">DNA ligase</fullName>
        <ecNumber evidence="1">6.5.1.2</ecNumber>
    </recommendedName>
    <alternativeName>
        <fullName evidence="1">Polydeoxyribonucleotide synthase [NAD(+)]</fullName>
    </alternativeName>
</protein>
<accession>B3QZS5</accession>
<dbReference type="EC" id="6.5.1.2" evidence="1"/>
<dbReference type="EMBL" id="CU469464">
    <property type="protein sequence ID" value="CAP18462.1"/>
    <property type="molecule type" value="Genomic_DNA"/>
</dbReference>
<dbReference type="SMR" id="B3QZS5"/>
<dbReference type="STRING" id="37692.ATP_00275"/>
<dbReference type="KEGG" id="pml:ATP_00275"/>
<dbReference type="eggNOG" id="COG0272">
    <property type="taxonomic scope" value="Bacteria"/>
</dbReference>
<dbReference type="HOGENOM" id="CLU_007764_2_1_14"/>
<dbReference type="Proteomes" id="UP000002020">
    <property type="component" value="Chromosome"/>
</dbReference>
<dbReference type="GO" id="GO:0005829">
    <property type="term" value="C:cytosol"/>
    <property type="evidence" value="ECO:0007669"/>
    <property type="project" value="TreeGrafter"/>
</dbReference>
<dbReference type="GO" id="GO:0003677">
    <property type="term" value="F:DNA binding"/>
    <property type="evidence" value="ECO:0007669"/>
    <property type="project" value="InterPro"/>
</dbReference>
<dbReference type="GO" id="GO:0003911">
    <property type="term" value="F:DNA ligase (NAD+) activity"/>
    <property type="evidence" value="ECO:0007669"/>
    <property type="project" value="UniProtKB-UniRule"/>
</dbReference>
<dbReference type="GO" id="GO:0046872">
    <property type="term" value="F:metal ion binding"/>
    <property type="evidence" value="ECO:0007669"/>
    <property type="project" value="UniProtKB-KW"/>
</dbReference>
<dbReference type="GO" id="GO:0006281">
    <property type="term" value="P:DNA repair"/>
    <property type="evidence" value="ECO:0007669"/>
    <property type="project" value="UniProtKB-KW"/>
</dbReference>
<dbReference type="GO" id="GO:0006260">
    <property type="term" value="P:DNA replication"/>
    <property type="evidence" value="ECO:0007669"/>
    <property type="project" value="UniProtKB-KW"/>
</dbReference>
<dbReference type="CDD" id="cd17748">
    <property type="entry name" value="BRCT_DNA_ligase_like"/>
    <property type="match status" value="1"/>
</dbReference>
<dbReference type="CDD" id="cd00114">
    <property type="entry name" value="LIGANc"/>
    <property type="match status" value="1"/>
</dbReference>
<dbReference type="FunFam" id="1.10.150.20:FF:000006">
    <property type="entry name" value="DNA ligase"/>
    <property type="match status" value="1"/>
</dbReference>
<dbReference type="Gene3D" id="1.10.150.20">
    <property type="entry name" value="5' to 3' exonuclease, C-terminal subdomain"/>
    <property type="match status" value="2"/>
</dbReference>
<dbReference type="Gene3D" id="3.40.50.10190">
    <property type="entry name" value="BRCT domain"/>
    <property type="match status" value="1"/>
</dbReference>
<dbReference type="Gene3D" id="3.30.470.30">
    <property type="entry name" value="DNA ligase/mRNA capping enzyme"/>
    <property type="match status" value="1"/>
</dbReference>
<dbReference type="Gene3D" id="1.10.287.610">
    <property type="entry name" value="Helix hairpin bin"/>
    <property type="match status" value="1"/>
</dbReference>
<dbReference type="Gene3D" id="2.40.50.140">
    <property type="entry name" value="Nucleic acid-binding proteins"/>
    <property type="match status" value="1"/>
</dbReference>
<dbReference type="HAMAP" id="MF_01588">
    <property type="entry name" value="DNA_ligase_A"/>
    <property type="match status" value="1"/>
</dbReference>
<dbReference type="InterPro" id="IPR001357">
    <property type="entry name" value="BRCT_dom"/>
</dbReference>
<dbReference type="InterPro" id="IPR036420">
    <property type="entry name" value="BRCT_dom_sf"/>
</dbReference>
<dbReference type="InterPro" id="IPR041663">
    <property type="entry name" value="DisA/LigA_HHH"/>
</dbReference>
<dbReference type="InterPro" id="IPR001679">
    <property type="entry name" value="DNA_ligase"/>
</dbReference>
<dbReference type="InterPro" id="IPR018239">
    <property type="entry name" value="DNA_ligase_AS"/>
</dbReference>
<dbReference type="InterPro" id="IPR013839">
    <property type="entry name" value="DNAligase_adenylation"/>
</dbReference>
<dbReference type="InterPro" id="IPR013840">
    <property type="entry name" value="DNAligase_N"/>
</dbReference>
<dbReference type="InterPro" id="IPR003583">
    <property type="entry name" value="Hlx-hairpin-Hlx_DNA-bd_motif"/>
</dbReference>
<dbReference type="InterPro" id="IPR012340">
    <property type="entry name" value="NA-bd_OB-fold"/>
</dbReference>
<dbReference type="InterPro" id="IPR004150">
    <property type="entry name" value="NAD_DNA_ligase_OB"/>
</dbReference>
<dbReference type="InterPro" id="IPR010994">
    <property type="entry name" value="RuvA_2-like"/>
</dbReference>
<dbReference type="NCBIfam" id="TIGR00575">
    <property type="entry name" value="dnlj"/>
    <property type="match status" value="1"/>
</dbReference>
<dbReference type="NCBIfam" id="NF005932">
    <property type="entry name" value="PRK07956.1"/>
    <property type="match status" value="1"/>
</dbReference>
<dbReference type="PANTHER" id="PTHR23389">
    <property type="entry name" value="CHROMOSOME TRANSMISSION FIDELITY FACTOR 18"/>
    <property type="match status" value="1"/>
</dbReference>
<dbReference type="PANTHER" id="PTHR23389:SF9">
    <property type="entry name" value="DNA LIGASE"/>
    <property type="match status" value="1"/>
</dbReference>
<dbReference type="Pfam" id="PF00533">
    <property type="entry name" value="BRCT"/>
    <property type="match status" value="1"/>
</dbReference>
<dbReference type="Pfam" id="PF01653">
    <property type="entry name" value="DNA_ligase_aden"/>
    <property type="match status" value="1"/>
</dbReference>
<dbReference type="Pfam" id="PF03120">
    <property type="entry name" value="DNA_ligase_OB"/>
    <property type="match status" value="1"/>
</dbReference>
<dbReference type="Pfam" id="PF12826">
    <property type="entry name" value="HHH_2"/>
    <property type="match status" value="1"/>
</dbReference>
<dbReference type="PIRSF" id="PIRSF001604">
    <property type="entry name" value="LigA"/>
    <property type="match status" value="1"/>
</dbReference>
<dbReference type="SMART" id="SM00292">
    <property type="entry name" value="BRCT"/>
    <property type="match status" value="1"/>
</dbReference>
<dbReference type="SMART" id="SM00278">
    <property type="entry name" value="HhH1"/>
    <property type="match status" value="2"/>
</dbReference>
<dbReference type="SMART" id="SM00532">
    <property type="entry name" value="LIGANc"/>
    <property type="match status" value="1"/>
</dbReference>
<dbReference type="SUPFAM" id="SSF52113">
    <property type="entry name" value="BRCT domain"/>
    <property type="match status" value="1"/>
</dbReference>
<dbReference type="SUPFAM" id="SSF56091">
    <property type="entry name" value="DNA ligase/mRNA capping enzyme, catalytic domain"/>
    <property type="match status" value="1"/>
</dbReference>
<dbReference type="SUPFAM" id="SSF50249">
    <property type="entry name" value="Nucleic acid-binding proteins"/>
    <property type="match status" value="1"/>
</dbReference>
<dbReference type="SUPFAM" id="SSF47781">
    <property type="entry name" value="RuvA domain 2-like"/>
    <property type="match status" value="1"/>
</dbReference>
<dbReference type="PROSITE" id="PS50172">
    <property type="entry name" value="BRCT"/>
    <property type="match status" value="1"/>
</dbReference>
<dbReference type="PROSITE" id="PS01055">
    <property type="entry name" value="DNA_LIGASE_N1"/>
    <property type="match status" value="1"/>
</dbReference>
<sequence length="659" mass="76485">MEEIKKRIIFLIDKINKTNYEYYTLNESSLNDQQYDALFRELLYLESKYPEYNYKFSPTTKIGGPISSKFHKFLHEKSMLSLNNVFNIKELKLFYDRISKKISNFTLLTELKIDGLAVSLKYKKGILDKAITRGDGYQGELITDNVKTIKELPLKLKEPLDLEVRGEVYMSYESFNYLNQIRKKENKSLFANPRNAASGTLRQLDSKVAAERNLSIFLYTIVNPPKFIITQKSILEFLTYLQFPVNNYYEYVLNWDQLIKKISYYEEIKNHLGYNTDGIVIKINELSFHSIIGYTSKAPKWAIAYKFKVFKTETLINNILFQIGRTGIVTPIAELLPTIVDGSVISKVNLHNFDYIKQKDIRVNDFVLVHKSGSIIPEIIEVIKTKRKNQIPFEMITHCYSCNTKLIKKDSNHFCFNLDCEEKKIQELFYFVSKSAMDINVLGLQTLKILFYKGFINNISDLYSLNQYKKEVEELHGFGKKKFNNIIISLEKSKNKCLSNFLIGLGIKNVGIHLAKILAQKFENIDNLQKASIESLLKIDEIGIKSAQNIKNFFLNSKNLKLIEKFKNLGLNLFYFKSKNNIKNNIFKNKKVIFTGILEKYSRNQAQNIVIELGGVIINSITNKTNYLILGKNPGSKLLKAKKFNIKVLQEHEFEELIK</sequence>
<gene>
    <name evidence="1" type="primary">ligA</name>
    <name type="ordered locus">ATP_00275</name>
</gene>